<keyword id="KW-0963">Cytoplasm</keyword>
<keyword id="KW-0312">Gluconeogenesis</keyword>
<keyword id="KW-0324">Glycolysis</keyword>
<keyword id="KW-0413">Isomerase</keyword>
<comment type="function">
    <text evidence="1">Involved in the gluconeogenesis. Catalyzes stereospecifically the conversion of dihydroxyacetone phosphate (DHAP) to D-glyceraldehyde-3-phosphate (G3P).</text>
</comment>
<comment type="catalytic activity">
    <reaction evidence="1">
        <text>D-glyceraldehyde 3-phosphate = dihydroxyacetone phosphate</text>
        <dbReference type="Rhea" id="RHEA:18585"/>
        <dbReference type="ChEBI" id="CHEBI:57642"/>
        <dbReference type="ChEBI" id="CHEBI:59776"/>
        <dbReference type="EC" id="5.3.1.1"/>
    </reaction>
</comment>
<comment type="pathway">
    <text evidence="1">Carbohydrate biosynthesis; gluconeogenesis.</text>
</comment>
<comment type="pathway">
    <text evidence="1">Carbohydrate degradation; glycolysis; D-glyceraldehyde 3-phosphate from glycerone phosphate: step 1/1.</text>
</comment>
<comment type="subunit">
    <text evidence="1">Homodimer.</text>
</comment>
<comment type="subcellular location">
    <subcellularLocation>
        <location evidence="1">Cytoplasm</location>
    </subcellularLocation>
</comment>
<comment type="similarity">
    <text evidence="1">Belongs to the triosephosphate isomerase family.</text>
</comment>
<feature type="chain" id="PRO_0000307558" description="Triosephosphate isomerase">
    <location>
        <begin position="1"/>
        <end position="260"/>
    </location>
</feature>
<feature type="active site" description="Electrophile" evidence="1">
    <location>
        <position position="103"/>
    </location>
</feature>
<feature type="active site" description="Proton acceptor" evidence="1">
    <location>
        <position position="175"/>
    </location>
</feature>
<feature type="binding site" evidence="1">
    <location>
        <begin position="11"/>
        <end position="13"/>
    </location>
    <ligand>
        <name>substrate</name>
    </ligand>
</feature>
<feature type="binding site" evidence="1">
    <location>
        <position position="181"/>
    </location>
    <ligand>
        <name>substrate</name>
    </ligand>
</feature>
<feature type="binding site" evidence="1">
    <location>
        <position position="220"/>
    </location>
    <ligand>
        <name>substrate</name>
    </ligand>
</feature>
<feature type="binding site" evidence="1">
    <location>
        <begin position="241"/>
        <end position="242"/>
    </location>
    <ligand>
        <name>substrate</name>
    </ligand>
</feature>
<dbReference type="EC" id="5.3.1.1" evidence="1"/>
<dbReference type="EMBL" id="CP000444">
    <property type="protein sequence ID" value="ABI42086.1"/>
    <property type="molecule type" value="Genomic_DNA"/>
</dbReference>
<dbReference type="SMR" id="Q0HXR9"/>
<dbReference type="KEGG" id="shm:Shewmr7_1087"/>
<dbReference type="HOGENOM" id="CLU_024251_2_1_6"/>
<dbReference type="UniPathway" id="UPA00109">
    <property type="reaction ID" value="UER00189"/>
</dbReference>
<dbReference type="UniPathway" id="UPA00138"/>
<dbReference type="GO" id="GO:0005829">
    <property type="term" value="C:cytosol"/>
    <property type="evidence" value="ECO:0007669"/>
    <property type="project" value="TreeGrafter"/>
</dbReference>
<dbReference type="GO" id="GO:0004807">
    <property type="term" value="F:triose-phosphate isomerase activity"/>
    <property type="evidence" value="ECO:0007669"/>
    <property type="project" value="UniProtKB-UniRule"/>
</dbReference>
<dbReference type="GO" id="GO:0006094">
    <property type="term" value="P:gluconeogenesis"/>
    <property type="evidence" value="ECO:0007669"/>
    <property type="project" value="UniProtKB-UniRule"/>
</dbReference>
<dbReference type="GO" id="GO:0046166">
    <property type="term" value="P:glyceraldehyde-3-phosphate biosynthetic process"/>
    <property type="evidence" value="ECO:0007669"/>
    <property type="project" value="TreeGrafter"/>
</dbReference>
<dbReference type="GO" id="GO:0019563">
    <property type="term" value="P:glycerol catabolic process"/>
    <property type="evidence" value="ECO:0007669"/>
    <property type="project" value="TreeGrafter"/>
</dbReference>
<dbReference type="GO" id="GO:0006096">
    <property type="term" value="P:glycolytic process"/>
    <property type="evidence" value="ECO:0007669"/>
    <property type="project" value="UniProtKB-UniRule"/>
</dbReference>
<dbReference type="CDD" id="cd00311">
    <property type="entry name" value="TIM"/>
    <property type="match status" value="1"/>
</dbReference>
<dbReference type="FunFam" id="3.20.20.70:FF:000016">
    <property type="entry name" value="Triosephosphate isomerase"/>
    <property type="match status" value="1"/>
</dbReference>
<dbReference type="Gene3D" id="3.20.20.70">
    <property type="entry name" value="Aldolase class I"/>
    <property type="match status" value="1"/>
</dbReference>
<dbReference type="HAMAP" id="MF_00147_B">
    <property type="entry name" value="TIM_B"/>
    <property type="match status" value="1"/>
</dbReference>
<dbReference type="InterPro" id="IPR013785">
    <property type="entry name" value="Aldolase_TIM"/>
</dbReference>
<dbReference type="InterPro" id="IPR035990">
    <property type="entry name" value="TIM_sf"/>
</dbReference>
<dbReference type="InterPro" id="IPR022896">
    <property type="entry name" value="TrioseP_Isoase_bac/euk"/>
</dbReference>
<dbReference type="InterPro" id="IPR000652">
    <property type="entry name" value="Triosephosphate_isomerase"/>
</dbReference>
<dbReference type="InterPro" id="IPR020861">
    <property type="entry name" value="Triosephosphate_isomerase_AS"/>
</dbReference>
<dbReference type="NCBIfam" id="TIGR00419">
    <property type="entry name" value="tim"/>
    <property type="match status" value="1"/>
</dbReference>
<dbReference type="PANTHER" id="PTHR21139">
    <property type="entry name" value="TRIOSEPHOSPHATE ISOMERASE"/>
    <property type="match status" value="1"/>
</dbReference>
<dbReference type="PANTHER" id="PTHR21139:SF42">
    <property type="entry name" value="TRIOSEPHOSPHATE ISOMERASE"/>
    <property type="match status" value="1"/>
</dbReference>
<dbReference type="Pfam" id="PF00121">
    <property type="entry name" value="TIM"/>
    <property type="match status" value="1"/>
</dbReference>
<dbReference type="SUPFAM" id="SSF51351">
    <property type="entry name" value="Triosephosphate isomerase (TIM)"/>
    <property type="match status" value="1"/>
</dbReference>
<dbReference type="PROSITE" id="PS00171">
    <property type="entry name" value="TIM_1"/>
    <property type="match status" value="1"/>
</dbReference>
<dbReference type="PROSITE" id="PS51440">
    <property type="entry name" value="TIM_2"/>
    <property type="match status" value="1"/>
</dbReference>
<protein>
    <recommendedName>
        <fullName evidence="1">Triosephosphate isomerase</fullName>
        <shortName evidence="1">TIM</shortName>
        <shortName evidence="1">TPI</shortName>
        <ecNumber evidence="1">5.3.1.1</ecNumber>
    </recommendedName>
    <alternativeName>
        <fullName evidence="1">Triose-phosphate isomerase</fullName>
    </alternativeName>
</protein>
<organism>
    <name type="scientific">Shewanella sp. (strain MR-7)</name>
    <dbReference type="NCBI Taxonomy" id="60481"/>
    <lineage>
        <taxon>Bacteria</taxon>
        <taxon>Pseudomonadati</taxon>
        <taxon>Pseudomonadota</taxon>
        <taxon>Gammaproteobacteria</taxon>
        <taxon>Alteromonadales</taxon>
        <taxon>Shewanellaceae</taxon>
        <taxon>Shewanella</taxon>
    </lineage>
</organism>
<name>TPIS_SHESR</name>
<sequence>MALRRPMVAGNWKMNGSAALAQELFKKFASKLQNDSAEVVLCPPSIYLESVRQLLEANKEALDGSLVRMGAQNLSQHDFGAYTGEVSGQMLKDCGCRYVIIGHSERRRMYGETSNIVAEKFAAAQKHGLTPILCVGESGPAREARRTFEVIAEELDIVIQKNGTMAFDNAIIAYEPLWAVGTGKSATPEQAQEVHAFIRKRLSEVSPFIGENIRILYGGSVTPSNAADLFAQPDVDGGLIGGASLNSTEFLSLCTIAMSA</sequence>
<reference key="1">
    <citation type="submission" date="2006-08" db="EMBL/GenBank/DDBJ databases">
        <title>Complete sequence of chromosome 1 of Shewanella sp. MR-7.</title>
        <authorList>
            <person name="Copeland A."/>
            <person name="Lucas S."/>
            <person name="Lapidus A."/>
            <person name="Barry K."/>
            <person name="Detter J.C."/>
            <person name="Glavina del Rio T."/>
            <person name="Hammon N."/>
            <person name="Israni S."/>
            <person name="Dalin E."/>
            <person name="Tice H."/>
            <person name="Pitluck S."/>
            <person name="Kiss H."/>
            <person name="Brettin T."/>
            <person name="Bruce D."/>
            <person name="Han C."/>
            <person name="Tapia R."/>
            <person name="Gilna P."/>
            <person name="Schmutz J."/>
            <person name="Larimer F."/>
            <person name="Land M."/>
            <person name="Hauser L."/>
            <person name="Kyrpides N."/>
            <person name="Mikhailova N."/>
            <person name="Nealson K."/>
            <person name="Konstantinidis K."/>
            <person name="Klappenbach J."/>
            <person name="Tiedje J."/>
            <person name="Richardson P."/>
        </authorList>
    </citation>
    <scope>NUCLEOTIDE SEQUENCE [LARGE SCALE GENOMIC DNA]</scope>
    <source>
        <strain>MR-7</strain>
    </source>
</reference>
<gene>
    <name evidence="1" type="primary">tpiA</name>
    <name type="ordered locus">Shewmr7_1087</name>
</gene>
<evidence type="ECO:0000255" key="1">
    <source>
        <dbReference type="HAMAP-Rule" id="MF_00147"/>
    </source>
</evidence>
<proteinExistence type="inferred from homology"/>
<accession>Q0HXR9</accession>